<accession>Q46473</accession>
<gene>
    <name type="primary">csmB</name>
</gene>
<keyword id="KW-0076">Bacteriochlorophyll</keyword>
<keyword id="KW-0148">Chlorophyll</keyword>
<keyword id="KW-0151">Chlorosome</keyword>
<keyword id="KW-0157">Chromophore</keyword>
<keyword id="KW-0602">Photosynthesis</keyword>
<keyword id="KW-0677">Repeat</keyword>
<reference key="1">
    <citation type="journal article" date="1994" name="Photosyn. Res.">
        <title>Genes encoding two chlorosome components from the green sulfur bacteria Chlorobium vibrioforme strain 8327D and Chlorobium tepidum.</title>
        <authorList>
            <person name="Chung S."/>
            <person name="Frank G."/>
            <person name="Zuber H."/>
            <person name="Bryant D.A."/>
        </authorList>
    </citation>
    <scope>NUCLEOTIDE SEQUENCE [GENOMIC DNA]</scope>
    <source>
        <strain>8327D</strain>
    </source>
</reference>
<reference key="2">
    <citation type="journal article" date="1996" name="Arch. Microbiol.">
        <title>Characterization of csmB genes, encoding a 7.5-kDa protein of the chlorosome envelope, from the green sulfur bacteria Chlorobium vibrioforme 8327D and Chlorobium tepidum.</title>
        <authorList>
            <person name="Chung S."/>
            <person name="Bryant D.A."/>
        </authorList>
    </citation>
    <scope>CHARACTERIZATION</scope>
    <source>
        <strain>8327D</strain>
    </source>
</reference>
<feature type="initiator methionine" description="Removed" evidence="1">
    <location>
        <position position="1"/>
    </location>
</feature>
<feature type="chain" id="PRO_0000192639" description="Chlorosome envelope protein B">
    <location>
        <begin position="2"/>
        <end position="75"/>
    </location>
</feature>
<feature type="repeat" description="1">
    <location>
        <begin position="8"/>
        <end position="17"/>
    </location>
</feature>
<feature type="repeat" description="2">
    <location>
        <begin position="29"/>
        <end position="39"/>
    </location>
</feature>
<feature type="repeat" description="3">
    <location>
        <begin position="40"/>
        <end position="50"/>
    </location>
</feature>
<feature type="repeat" description="4">
    <location>
        <begin position="51"/>
        <end position="61"/>
    </location>
</feature>
<feature type="region of interest" description="4 X approximate repeats">
    <location>
        <begin position="8"/>
        <end position="61"/>
    </location>
</feature>
<comment type="function">
    <text>Component of the photosynthetic apparatus which may bind the chlorosome to the bacteriochlorophyll a protein monolayer.</text>
</comment>
<comment type="subcellular location">
    <subcellularLocation>
        <location>Chlorosome</location>
        <location>Chlorosome envelope</location>
    </subcellularLocation>
</comment>
<comment type="similarity">
    <text evidence="2">Belongs to the CsmB/CsmF family.</text>
</comment>
<comment type="sequence caution" evidence="2">
    <conflict type="erroneous initiation">
        <sequence resource="EMBL-CDS" id="AAB02565"/>
    </conflict>
</comment>
<organism>
    <name type="scientific">Prosthecochloris vibrioformis</name>
    <name type="common">Chlorobium vibrioforme</name>
    <dbReference type="NCBI Taxonomy" id="1098"/>
    <lineage>
        <taxon>Bacteria</taxon>
        <taxon>Pseudomonadati</taxon>
        <taxon>Chlorobiota</taxon>
        <taxon>Chlorobiia</taxon>
        <taxon>Chlorobiales</taxon>
        <taxon>Chlorobiaceae</taxon>
        <taxon>Prosthecochloris</taxon>
    </lineage>
</organism>
<dbReference type="EMBL" id="U58359">
    <property type="protein sequence ID" value="AAB02565.1"/>
    <property type="status" value="ALT_INIT"/>
    <property type="molecule type" value="Genomic_DNA"/>
</dbReference>
<dbReference type="SMR" id="Q46473"/>
<dbReference type="GO" id="GO:0033105">
    <property type="term" value="C:chlorosome envelope"/>
    <property type="evidence" value="ECO:0007669"/>
    <property type="project" value="UniProtKB-SubCell"/>
</dbReference>
<dbReference type="GO" id="GO:0042314">
    <property type="term" value="F:bacteriochlorophyll binding"/>
    <property type="evidence" value="ECO:0007669"/>
    <property type="project" value="UniProtKB-KW"/>
</dbReference>
<dbReference type="GO" id="GO:0015979">
    <property type="term" value="P:photosynthesis"/>
    <property type="evidence" value="ECO:0007669"/>
    <property type="project" value="UniProtKB-KW"/>
</dbReference>
<name>CSMB_PROVB</name>
<sequence length="75" mass="7736">MSNGTNIDVAGAINTLTETFGKLFQMQVDVANNSLKALAEVAEPLGKTATDLVASFANVATQVLQNVSSAVAPKK</sequence>
<protein>
    <recommendedName>
        <fullName>Chlorosome envelope protein B</fullName>
    </recommendedName>
    <alternativeName>
        <fullName>Chlorosome 7.5 kDa protein</fullName>
    </alternativeName>
    <alternativeName>
        <fullName>Gerola-Olson chlorosome protein</fullName>
    </alternativeName>
</protein>
<evidence type="ECO:0000250" key="1"/>
<evidence type="ECO:0000305" key="2"/>
<proteinExistence type="evidence at protein level"/>